<reference key="1">
    <citation type="journal article" date="2003" name="Proc. Natl. Acad. Sci. U.S.A.">
        <title>The complete genome sequence of the carcinogenic bacterium Helicobacter hepaticus.</title>
        <authorList>
            <person name="Suerbaum S."/>
            <person name="Josenhans C."/>
            <person name="Sterzenbach T."/>
            <person name="Drescher B."/>
            <person name="Brandt P."/>
            <person name="Bell M."/>
            <person name="Droege M."/>
            <person name="Fartmann B."/>
            <person name="Fischer H.-P."/>
            <person name="Ge Z."/>
            <person name="Hoerster A."/>
            <person name="Holland R."/>
            <person name="Klein K."/>
            <person name="Koenig J."/>
            <person name="Macko L."/>
            <person name="Mendz G.L."/>
            <person name="Nyakatura G."/>
            <person name="Schauer D.B."/>
            <person name="Shen Z."/>
            <person name="Weber J."/>
            <person name="Frosch M."/>
            <person name="Fox J.G."/>
        </authorList>
    </citation>
    <scope>NUCLEOTIDE SEQUENCE [LARGE SCALE GENOMIC DNA]</scope>
    <source>
        <strain>ATCC 51449 / 3B1</strain>
    </source>
</reference>
<organism>
    <name type="scientific">Helicobacter hepaticus (strain ATCC 51449 / 3B1)</name>
    <dbReference type="NCBI Taxonomy" id="235279"/>
    <lineage>
        <taxon>Bacteria</taxon>
        <taxon>Pseudomonadati</taxon>
        <taxon>Campylobacterota</taxon>
        <taxon>Epsilonproteobacteria</taxon>
        <taxon>Campylobacterales</taxon>
        <taxon>Helicobacteraceae</taxon>
        <taxon>Helicobacter</taxon>
    </lineage>
</organism>
<feature type="chain" id="PRO_0000394785" description="UPF0763 protein HH_0976">
    <location>
        <begin position="1"/>
        <end position="143"/>
    </location>
</feature>
<keyword id="KW-1185">Reference proteome</keyword>
<gene>
    <name type="ordered locus">HH_0976</name>
</gene>
<proteinExistence type="inferred from homology"/>
<sequence>MKASKQEKWLDESGENLGILRRLEGNAMLLAMESGGFSKEDLWFLQDEQGEEYVVFPQKIFVQLLSHIKNIQEEKLVMRLEKDIISQMPIDFDDAMVVAKNALESLRLNDGNLPDINTNTLAKDIKKKYPNLFFDIDYLRKSK</sequence>
<protein>
    <recommendedName>
        <fullName evidence="1">UPF0763 protein HH_0976</fullName>
    </recommendedName>
</protein>
<dbReference type="EMBL" id="AE017125">
    <property type="protein sequence ID" value="AAP77573.1"/>
    <property type="molecule type" value="Genomic_DNA"/>
</dbReference>
<dbReference type="RefSeq" id="WP_011115816.1">
    <property type="nucleotide sequence ID" value="NC_004917.1"/>
</dbReference>
<dbReference type="SMR" id="Q7VHJ1"/>
<dbReference type="STRING" id="235279.HH_0976"/>
<dbReference type="KEGG" id="hhe:HH_0976"/>
<dbReference type="eggNOG" id="ENOG5030YCA">
    <property type="taxonomic scope" value="Bacteria"/>
</dbReference>
<dbReference type="HOGENOM" id="CLU_120359_0_0_7"/>
<dbReference type="OrthoDB" id="5324700at2"/>
<dbReference type="Proteomes" id="UP000002495">
    <property type="component" value="Chromosome"/>
</dbReference>
<dbReference type="HAMAP" id="MF_02110">
    <property type="entry name" value="UPF0763"/>
    <property type="match status" value="1"/>
</dbReference>
<dbReference type="InterPro" id="IPR019724">
    <property type="entry name" value="UPF0763"/>
</dbReference>
<dbReference type="Pfam" id="PF10788">
    <property type="entry name" value="DUF2603"/>
    <property type="match status" value="1"/>
</dbReference>
<comment type="similarity">
    <text evidence="1">Belongs to the UPF0763 family.</text>
</comment>
<name>Y976_HELHP</name>
<evidence type="ECO:0000255" key="1">
    <source>
        <dbReference type="HAMAP-Rule" id="MF_02110"/>
    </source>
</evidence>
<accession>Q7VHJ1</accession>